<evidence type="ECO:0000250" key="1"/>
<evidence type="ECO:0000305" key="2"/>
<gene>
    <name type="primary">ef1b</name>
    <name type="ordered locus">PYRAB00290</name>
    <name type="ORF">PAB3009</name>
</gene>
<comment type="function">
    <text evidence="1">Promotes the exchange of GDP for GTP in EF-1-alpha/GDP, thus allowing the regeneration of EF-1-alpha/GTP that could then be used to form the ternary complex EF-1-alpha/GTP/AAtRNA.</text>
</comment>
<comment type="similarity">
    <text evidence="2">Belongs to the EF-1-beta/EF-1-delta family.</text>
</comment>
<name>EF1B_PYRAB</name>
<sequence length="91" mass="10239">MSDFNIVGVIKVMPSDPEVNLDELEEKLKAVIPEKYGLAKVEREPIAFGLVALKFYVLGKDEEGYSFDEVAEKFKEVENVESAEVETVSRI</sequence>
<keyword id="KW-0251">Elongation factor</keyword>
<keyword id="KW-0648">Protein biosynthesis</keyword>
<dbReference type="EMBL" id="AJ248283">
    <property type="protein sequence ID" value="CAB48952.1"/>
    <property type="molecule type" value="Genomic_DNA"/>
</dbReference>
<dbReference type="EMBL" id="HE613800">
    <property type="protein sequence ID" value="CCE69397.1"/>
    <property type="molecule type" value="Genomic_DNA"/>
</dbReference>
<dbReference type="PIR" id="A75188">
    <property type="entry name" value="A75188"/>
</dbReference>
<dbReference type="RefSeq" id="WP_010867152.1">
    <property type="nucleotide sequence ID" value="NC_000868.1"/>
</dbReference>
<dbReference type="SMR" id="Q9V2P6"/>
<dbReference type="STRING" id="272844.PAB3009"/>
<dbReference type="KEGG" id="pab:PAB3009"/>
<dbReference type="PATRIC" id="fig|272844.11.peg.31"/>
<dbReference type="eggNOG" id="arCOG01988">
    <property type="taxonomic scope" value="Archaea"/>
</dbReference>
<dbReference type="HOGENOM" id="CLU_165896_0_0_2"/>
<dbReference type="OrthoDB" id="84643at2157"/>
<dbReference type="PhylomeDB" id="Q9V2P6"/>
<dbReference type="Proteomes" id="UP000000810">
    <property type="component" value="Chromosome"/>
</dbReference>
<dbReference type="Proteomes" id="UP000009139">
    <property type="component" value="Chromosome"/>
</dbReference>
<dbReference type="GO" id="GO:0003746">
    <property type="term" value="F:translation elongation factor activity"/>
    <property type="evidence" value="ECO:0007669"/>
    <property type="project" value="UniProtKB-UniRule"/>
</dbReference>
<dbReference type="CDD" id="cd00292">
    <property type="entry name" value="EF1B"/>
    <property type="match status" value="1"/>
</dbReference>
<dbReference type="Gene3D" id="3.30.70.60">
    <property type="match status" value="1"/>
</dbReference>
<dbReference type="HAMAP" id="MF_00043">
    <property type="entry name" value="EF1_beta"/>
    <property type="match status" value="1"/>
</dbReference>
<dbReference type="InterPro" id="IPR036219">
    <property type="entry name" value="eEF-1beta-like_sf"/>
</dbReference>
<dbReference type="InterPro" id="IPR014038">
    <property type="entry name" value="EF1B_bsu/dsu_GNE"/>
</dbReference>
<dbReference type="InterPro" id="IPR014717">
    <property type="entry name" value="Transl_elong_EF1B/ribsomal_bS6"/>
</dbReference>
<dbReference type="InterPro" id="IPR004542">
    <property type="entry name" value="Transl_elong_EF1B_B_arc"/>
</dbReference>
<dbReference type="NCBIfam" id="TIGR00489">
    <property type="entry name" value="aEF-1_beta"/>
    <property type="match status" value="1"/>
</dbReference>
<dbReference type="NCBIfam" id="NF001670">
    <property type="entry name" value="PRK00435.1"/>
    <property type="match status" value="1"/>
</dbReference>
<dbReference type="PANTHER" id="PTHR39647">
    <property type="entry name" value="ELONGATION FACTOR 1-BETA"/>
    <property type="match status" value="1"/>
</dbReference>
<dbReference type="PANTHER" id="PTHR39647:SF1">
    <property type="entry name" value="ELONGATION FACTOR 1-BETA"/>
    <property type="match status" value="1"/>
</dbReference>
<dbReference type="Pfam" id="PF00736">
    <property type="entry name" value="EF1_GNE"/>
    <property type="match status" value="1"/>
</dbReference>
<dbReference type="PIRSF" id="PIRSF006521">
    <property type="entry name" value="Transl_elong_EF1B_B_arc"/>
    <property type="match status" value="1"/>
</dbReference>
<dbReference type="SMART" id="SM00888">
    <property type="entry name" value="EF1_GNE"/>
    <property type="match status" value="1"/>
</dbReference>
<dbReference type="SUPFAM" id="SSF54984">
    <property type="entry name" value="eEF-1beta-like"/>
    <property type="match status" value="1"/>
</dbReference>
<organism>
    <name type="scientific">Pyrococcus abyssi (strain GE5 / Orsay)</name>
    <dbReference type="NCBI Taxonomy" id="272844"/>
    <lineage>
        <taxon>Archaea</taxon>
        <taxon>Methanobacteriati</taxon>
        <taxon>Methanobacteriota</taxon>
        <taxon>Thermococci</taxon>
        <taxon>Thermococcales</taxon>
        <taxon>Thermococcaceae</taxon>
        <taxon>Pyrococcus</taxon>
    </lineage>
</organism>
<reference key="1">
    <citation type="journal article" date="2003" name="Mol. Microbiol.">
        <title>An integrated analysis of the genome of the hyperthermophilic archaeon Pyrococcus abyssi.</title>
        <authorList>
            <person name="Cohen G.N."/>
            <person name="Barbe V."/>
            <person name="Flament D."/>
            <person name="Galperin M."/>
            <person name="Heilig R."/>
            <person name="Lecompte O."/>
            <person name="Poch O."/>
            <person name="Prieur D."/>
            <person name="Querellou J."/>
            <person name="Ripp R."/>
            <person name="Thierry J.-C."/>
            <person name="Van der Oost J."/>
            <person name="Weissenbach J."/>
            <person name="Zivanovic Y."/>
            <person name="Forterre P."/>
        </authorList>
    </citation>
    <scope>NUCLEOTIDE SEQUENCE [LARGE SCALE GENOMIC DNA]</scope>
    <source>
        <strain>GE5 / Orsay</strain>
    </source>
</reference>
<reference key="2">
    <citation type="journal article" date="2012" name="Curr. Microbiol.">
        <title>Re-annotation of two hyperthermophilic archaea Pyrococcus abyssi GE5 and Pyrococcus furiosus DSM 3638.</title>
        <authorList>
            <person name="Gao J."/>
            <person name="Wang J."/>
        </authorList>
    </citation>
    <scope>GENOME REANNOTATION</scope>
    <source>
        <strain>GE5 / Orsay</strain>
    </source>
</reference>
<proteinExistence type="inferred from homology"/>
<accession>Q9V2P6</accession>
<accession>G8ZFK6</accession>
<protein>
    <recommendedName>
        <fullName>Elongation factor 1-beta</fullName>
        <shortName>EF-1-beta</shortName>
    </recommendedName>
    <alternativeName>
        <fullName>aEF-1beta</fullName>
    </alternativeName>
</protein>
<feature type="chain" id="PRO_0000155062" description="Elongation factor 1-beta">
    <location>
        <begin position="1"/>
        <end position="91"/>
    </location>
</feature>